<keyword id="KW-0284">Flavonoid biosynthesis</keyword>
<keyword id="KW-0521">NADP</keyword>
<keyword id="KW-0560">Oxidoreductase</keyword>
<reference key="1">
    <citation type="submission" date="1998-12" db="EMBL/GenBank/DDBJ databases">
        <title>Molecular cloning and expression of anthocyanin biosynthesis genes from 'Fuji apple'.</title>
        <authorList>
            <person name="Lee J.-R."/>
            <person name="Hong S.-T."/>
            <person name="Yoo Y.G."/>
            <person name="Kim S.-R."/>
        </authorList>
    </citation>
    <scope>NUCLEOTIDE SEQUENCE [MRNA]</scope>
    <source>
        <strain>cv. Fuji</strain>
        <tissue>Peelings</tissue>
    </source>
</reference>
<reference key="2">
    <citation type="journal article" date="2003" name="Arch. Biochem. Biophys.">
        <title>Molecular cloning, substrate specificity of the functionally expressed dihydroflavonol 4-reductases from Malus domestica and Pyrus communis cultivars and the consequences for flavonoid metabolism.</title>
        <authorList>
            <person name="Fischer T.C."/>
            <person name="Halbwirth H."/>
            <person name="Meisel B."/>
            <person name="Stich K."/>
            <person name="Forkmann G."/>
        </authorList>
    </citation>
    <scope>NUCLEOTIDE SEQUENCE [MRNA]</scope>
    <scope>FUNCTION</scope>
    <scope>CATALYTIC ACTIVITY</scope>
    <scope>BIOPHYSICOCHEMICAL PROPERTIES</scope>
    <source>
        <strain>cv. M9</strain>
        <strain>cv. Weirouge</strain>
    </source>
</reference>
<reference key="3">
    <citation type="journal article" date="2002" name="Plant Physiol. Biochem.">
        <title>Anthocyanin biosynthetic genes are coordinately expressed during red coloration in apple skin.</title>
        <authorList>
            <person name="Honda C."/>
            <person name="Kotoda N."/>
            <person name="Wada M."/>
            <person name="Kondo S."/>
            <person name="Kobayashi S."/>
            <person name="Soejima J."/>
            <person name="Zhang Z."/>
            <person name="Tsuda T."/>
            <person name="Moriguchi T."/>
        </authorList>
    </citation>
    <scope>NUCLEOTIDE SEQUENCE [MRNA] OF 4-317</scope>
    <scope>DEVELOPMENTAL STAGE</scope>
    <source>
        <strain>cv. Jonathan</strain>
        <tissue>Peelings</tissue>
    </source>
</reference>
<dbReference type="EC" id="1.1.1.219" evidence="2"/>
<dbReference type="EC" id="1.1.1.234" evidence="2"/>
<dbReference type="EMBL" id="AF117268">
    <property type="protein sequence ID" value="AAD26204.1"/>
    <property type="molecule type" value="mRNA"/>
</dbReference>
<dbReference type="EMBL" id="AY227729">
    <property type="protein sequence ID" value="AAO39817.1"/>
    <property type="molecule type" value="mRNA"/>
</dbReference>
<dbReference type="EMBL" id="AY227728">
    <property type="protein sequence ID" value="AAO39816.1"/>
    <property type="molecule type" value="mRNA"/>
</dbReference>
<dbReference type="EMBL" id="AB074488">
    <property type="protein sequence ID" value="BAB92999.1"/>
    <property type="molecule type" value="mRNA"/>
</dbReference>
<dbReference type="RefSeq" id="NP_001280868.1">
    <property type="nucleotide sequence ID" value="NM_001293939.1"/>
</dbReference>
<dbReference type="SMR" id="Q9XES5"/>
<dbReference type="EnsemblPlants" id="mRNA:MD15G0020300">
    <property type="protein sequence ID" value="mRNA:MD15G0020300"/>
    <property type="gene ID" value="MD15G0020300"/>
</dbReference>
<dbReference type="GeneID" id="103450464"/>
<dbReference type="Gramene" id="mRNA:MD15G0020300">
    <property type="protein sequence ID" value="mRNA:MD15G0020300"/>
    <property type="gene ID" value="MD15G0020300"/>
</dbReference>
<dbReference type="KEGG" id="mdm:103450464"/>
<dbReference type="OrthoDB" id="2735536at2759"/>
<dbReference type="BRENDA" id="1.1.1.234">
    <property type="organism ID" value="3164"/>
</dbReference>
<dbReference type="GO" id="GO:0045552">
    <property type="term" value="F:dihydrokaempferol 4-reductase activity"/>
    <property type="evidence" value="ECO:0007669"/>
    <property type="project" value="UniProtKB-EC"/>
</dbReference>
<dbReference type="GO" id="GO:0047890">
    <property type="term" value="F:flavanone 4-reductase activity"/>
    <property type="evidence" value="ECO:0007669"/>
    <property type="project" value="UniProtKB-EC"/>
</dbReference>
<dbReference type="GO" id="GO:0009718">
    <property type="term" value="P:anthocyanin-containing compound biosynthetic process"/>
    <property type="evidence" value="ECO:0007669"/>
    <property type="project" value="TreeGrafter"/>
</dbReference>
<dbReference type="CDD" id="cd08958">
    <property type="entry name" value="FR_SDR_e"/>
    <property type="match status" value="1"/>
</dbReference>
<dbReference type="FunFam" id="3.40.50.720:FF:000085">
    <property type="entry name" value="Dihydroflavonol reductase"/>
    <property type="match status" value="1"/>
</dbReference>
<dbReference type="Gene3D" id="3.40.50.720">
    <property type="entry name" value="NAD(P)-binding Rossmann-like Domain"/>
    <property type="match status" value="1"/>
</dbReference>
<dbReference type="InterPro" id="IPR001509">
    <property type="entry name" value="Epimerase_deHydtase"/>
</dbReference>
<dbReference type="InterPro" id="IPR036291">
    <property type="entry name" value="NAD(P)-bd_dom_sf"/>
</dbReference>
<dbReference type="InterPro" id="IPR050425">
    <property type="entry name" value="NAD(P)_dehydrat-like"/>
</dbReference>
<dbReference type="PANTHER" id="PTHR10366">
    <property type="entry name" value="NAD DEPENDENT EPIMERASE/DEHYDRATASE"/>
    <property type="match status" value="1"/>
</dbReference>
<dbReference type="PANTHER" id="PTHR10366:SF564">
    <property type="entry name" value="STEROL-4-ALPHA-CARBOXYLATE 3-DEHYDROGENASE, DECARBOXYLATING"/>
    <property type="match status" value="1"/>
</dbReference>
<dbReference type="Pfam" id="PF01370">
    <property type="entry name" value="Epimerase"/>
    <property type="match status" value="1"/>
</dbReference>
<dbReference type="SUPFAM" id="SSF51735">
    <property type="entry name" value="NAD(P)-binding Rossmann-fold domains"/>
    <property type="match status" value="1"/>
</dbReference>
<organism>
    <name type="scientific">Malus domestica</name>
    <name type="common">Apple</name>
    <name type="synonym">Pyrus malus</name>
    <dbReference type="NCBI Taxonomy" id="3750"/>
    <lineage>
        <taxon>Eukaryota</taxon>
        <taxon>Viridiplantae</taxon>
        <taxon>Streptophyta</taxon>
        <taxon>Embryophyta</taxon>
        <taxon>Tracheophyta</taxon>
        <taxon>Spermatophyta</taxon>
        <taxon>Magnoliopsida</taxon>
        <taxon>eudicotyledons</taxon>
        <taxon>Gunneridae</taxon>
        <taxon>Pentapetalae</taxon>
        <taxon>rosids</taxon>
        <taxon>fabids</taxon>
        <taxon>Rosales</taxon>
        <taxon>Rosaceae</taxon>
        <taxon>Amygdaloideae</taxon>
        <taxon>Maleae</taxon>
        <taxon>Malus</taxon>
    </lineage>
</organism>
<protein>
    <recommendedName>
        <fullName>Bifunctional dihydroflavonol 4-reductase/flavanone 4-reductase</fullName>
    </recommendedName>
    <alternativeName>
        <fullName>Dihydroflavonol 4-reductase</fullName>
        <shortName>DFR</shortName>
        <ecNumber evidence="2">1.1.1.219</ecNumber>
    </alternativeName>
    <alternativeName>
        <fullName>Dihydrokaempferol 4-reductase</fullName>
    </alternativeName>
    <alternativeName>
        <fullName>Flavanone 4-reductase</fullName>
        <shortName>FNR</shortName>
        <ecNumber evidence="2">1.1.1.234</ecNumber>
    </alternativeName>
</protein>
<evidence type="ECO:0000250" key="1">
    <source>
        <dbReference type="UniProtKB" id="A0A059TC02"/>
    </source>
</evidence>
<evidence type="ECO:0000269" key="2">
    <source>
    </source>
</evidence>
<evidence type="ECO:0000269" key="3">
    <source ref="3"/>
</evidence>
<evidence type="ECO:0000305" key="4"/>
<feature type="chain" id="PRO_0000367056" description="Bifunctional dihydroflavonol 4-reductase/flavanone 4-reductase">
    <location>
        <begin position="1"/>
        <end position="348"/>
    </location>
</feature>
<feature type="binding site" evidence="1">
    <location>
        <position position="44"/>
    </location>
    <ligand>
        <name>NADP(+)</name>
        <dbReference type="ChEBI" id="CHEBI:58349"/>
    </ligand>
</feature>
<feature type="binding site" evidence="1">
    <location>
        <position position="163"/>
    </location>
    <ligand>
        <name>NADP(+)</name>
        <dbReference type="ChEBI" id="CHEBI:58349"/>
    </ligand>
</feature>
<feature type="sequence variant" description="In strain: cv. M9.">
    <original>V</original>
    <variation>A</variation>
    <location>
        <position position="347"/>
    </location>
</feature>
<comment type="function">
    <text evidence="2">Bifunctional enzyme involved in flavonoid metabolism. May use dihydroquercetin, dihydrokaempferol, eriodictyol, garbanzol (5-deoxydihydrokaempferol), dihydrofisetin (5-deoxydihydroquercetin), naringenin to a low extent (10%), but not 5-deoxynaringenin or butin (5-deoxyeriodictyol) as substrate.</text>
</comment>
<comment type="catalytic activity">
    <reaction evidence="2">
        <text>a (2R,3S,4S)-leucoanthocyanidin + NADP(+) = a (2R,3R)-dihydroflavonol + NADPH + H(+)</text>
        <dbReference type="Rhea" id="RHEA:54444"/>
        <dbReference type="ChEBI" id="CHEBI:15378"/>
        <dbReference type="ChEBI" id="CHEBI:57783"/>
        <dbReference type="ChEBI" id="CHEBI:58349"/>
        <dbReference type="ChEBI" id="CHEBI:138176"/>
        <dbReference type="ChEBI" id="CHEBI:138188"/>
        <dbReference type="EC" id="1.1.1.219"/>
    </reaction>
</comment>
<comment type="catalytic activity">
    <reaction evidence="2">
        <text>(2S)-flavan-4-ol + NADP(+) = (2S)-flavanone + NADPH + H(+)</text>
        <dbReference type="Rhea" id="RHEA:11228"/>
        <dbReference type="ChEBI" id="CHEBI:15378"/>
        <dbReference type="ChEBI" id="CHEBI:15605"/>
        <dbReference type="ChEBI" id="CHEBI:15606"/>
        <dbReference type="ChEBI" id="CHEBI:57783"/>
        <dbReference type="ChEBI" id="CHEBI:58349"/>
        <dbReference type="EC" id="1.1.1.234"/>
    </reaction>
</comment>
<comment type="biophysicochemical properties">
    <kinetics>
        <KM evidence="2">3.9 uM for eriodictyol</KM>
        <KM evidence="2">34 uM for dihydrokaempferol</KM>
        <KM evidence="2">26 uM for dihydroquercetin</KM>
        <Vmax evidence="2">4.6 nmol/sec/g enzyme toward eriodictyol</Vmax>
        <Vmax evidence="2">186.0 nmol/sec/g enzyme toward dihydrokaempferol</Vmax>
        <Vmax evidence="2">91.0 nmol/sec/g enzyme toward dihydroquercetin</Vmax>
    </kinetics>
    <phDependence>
        <text evidence="2">Optimum pH is 5.75 with dihydroquercetin as substrate.</text>
    </phDependence>
</comment>
<comment type="developmental stage">
    <text evidence="3">Expressed during fruit ripening.</text>
</comment>
<comment type="similarity">
    <text evidence="4">Belongs to the NAD(P)-dependent epimerase/dehydratase family. Dihydroflavonol-4-reductase subfamily.</text>
</comment>
<proteinExistence type="evidence at protein level"/>
<accession>Q9XES5</accession>
<accession>Q84KP1</accession>
<accession>Q8L5N3</accession>
<sequence>MGSESESVCVTGASGFIGSWLVMRLLEHGYTVRATVRDPTNQKKVKHLLDLPKAETHLTLWKADLADEGSFDEAIQGCSGVFHVATPMDFESKDPENEVIKPTINGLLDILKACQKAKTVRKLVFTSSAGTVNVEEHQKPVYDESNWSDVEFCRSVKMTGWMYFVSKTLAEQAAWKYAKENNIDFITIIPTLVIGPFLMPSMPPSLITGLSPILRNESHYGIIKQGQYVHLDDLCLSHIYLYEHPKAEGRYICSSHDATIHELVKMLREKYPEYNIPTKFKGIDDNLEPVHFSSKKLREIGFEFKYSLEDMFVGAVDACRAKGLIPIPIPAEKTEAAEESNLVDVKVG</sequence>
<gene>
    <name type="primary">DFR</name>
</gene>
<name>DFRA_MALDO</name>